<comment type="function">
    <text evidence="1">One of the components of the core complex of photosystem II (PSII). PSII is a light-driven water:plastoquinone oxidoreductase that uses light energy to abstract electrons from H(2)O, generating O(2) and a proton gradient subsequently used for ATP formation. It consists of a core antenna complex that captures photons, and an electron transfer chain that converts photonic excitation into a charge separation. This subunit is found at the monomer-monomer interface.</text>
</comment>
<comment type="subunit">
    <text evidence="1">PSII is composed of 1 copy each of membrane proteins PsbA, PsbB, PsbC, PsbD, PsbE, PsbF, PsbH, PsbI, PsbJ, PsbK, PsbL, PsbM, PsbT, PsbX, PsbY, PsbZ, Psb30/Ycf12, peripheral proteins PsbO, CyanoQ (PsbQ), PsbU, PsbV and a large number of cofactors. It forms dimeric complexes.</text>
</comment>
<comment type="subcellular location">
    <subcellularLocation>
        <location evidence="1">Cellular thylakoid membrane</location>
        <topology evidence="1">Single-pass membrane protein</topology>
    </subcellularLocation>
</comment>
<comment type="similarity">
    <text evidence="1">Belongs to the PsbM family.</text>
</comment>
<evidence type="ECO:0000255" key="1">
    <source>
        <dbReference type="HAMAP-Rule" id="MF_00438"/>
    </source>
</evidence>
<keyword id="KW-0472">Membrane</keyword>
<keyword id="KW-0602">Photosynthesis</keyword>
<keyword id="KW-0604">Photosystem II</keyword>
<keyword id="KW-0674">Reaction center</keyword>
<keyword id="KW-1185">Reference proteome</keyword>
<keyword id="KW-0793">Thylakoid</keyword>
<keyword id="KW-0812">Transmembrane</keyword>
<keyword id="KW-1133">Transmembrane helix</keyword>
<protein>
    <recommendedName>
        <fullName evidence="1">Photosystem II reaction center protein M</fullName>
        <shortName evidence="1">PSII-M</shortName>
    </recommendedName>
</protein>
<feature type="chain" id="PRO_1000124443" description="Photosystem II reaction center protein M">
    <location>
        <begin position="1"/>
        <end position="34"/>
    </location>
</feature>
<feature type="transmembrane region" description="Helical" evidence="1">
    <location>
        <begin position="7"/>
        <end position="27"/>
    </location>
</feature>
<sequence length="34" mass="3798">MQVNDLGFIATILFVLVPTVFLLILYIQTNKTAS</sequence>
<dbReference type="EMBL" id="CP000951">
    <property type="protein sequence ID" value="ACB00132.1"/>
    <property type="molecule type" value="Genomic_DNA"/>
</dbReference>
<dbReference type="RefSeq" id="WP_012307751.1">
    <property type="nucleotide sequence ID" value="NZ_JAHHPU010000010.1"/>
</dbReference>
<dbReference type="SMR" id="B1XIN0"/>
<dbReference type="STRING" id="32049.SYNPCC7002_A2151"/>
<dbReference type="KEGG" id="syp:SYNPCC7002_A2151"/>
<dbReference type="eggNOG" id="ENOG50339PB">
    <property type="taxonomic scope" value="Bacteria"/>
</dbReference>
<dbReference type="HOGENOM" id="CLU_215415_0_0_3"/>
<dbReference type="Proteomes" id="UP000001688">
    <property type="component" value="Chromosome"/>
</dbReference>
<dbReference type="GO" id="GO:0009523">
    <property type="term" value="C:photosystem II"/>
    <property type="evidence" value="ECO:0007669"/>
    <property type="project" value="UniProtKB-KW"/>
</dbReference>
<dbReference type="GO" id="GO:0031676">
    <property type="term" value="C:plasma membrane-derived thylakoid membrane"/>
    <property type="evidence" value="ECO:0007669"/>
    <property type="project" value="UniProtKB-SubCell"/>
</dbReference>
<dbReference type="GO" id="GO:0019684">
    <property type="term" value="P:photosynthesis, light reaction"/>
    <property type="evidence" value="ECO:0007669"/>
    <property type="project" value="InterPro"/>
</dbReference>
<dbReference type="HAMAP" id="MF_00438">
    <property type="entry name" value="PSII_PsbM"/>
    <property type="match status" value="1"/>
</dbReference>
<dbReference type="InterPro" id="IPR007826">
    <property type="entry name" value="PSII_PsbM"/>
</dbReference>
<dbReference type="InterPro" id="IPR037269">
    <property type="entry name" value="PSII_PsbM_sf"/>
</dbReference>
<dbReference type="NCBIfam" id="TIGR03038">
    <property type="entry name" value="PS_II_psbM"/>
    <property type="match status" value="1"/>
</dbReference>
<dbReference type="PANTHER" id="PTHR35774">
    <property type="entry name" value="PHOTOSYSTEM II REACTION CENTER PROTEIN M"/>
    <property type="match status" value="1"/>
</dbReference>
<dbReference type="PANTHER" id="PTHR35774:SF1">
    <property type="entry name" value="PHOTOSYSTEM II REACTION CENTER PROTEIN M"/>
    <property type="match status" value="1"/>
</dbReference>
<dbReference type="Pfam" id="PF05151">
    <property type="entry name" value="PsbM"/>
    <property type="match status" value="1"/>
</dbReference>
<dbReference type="SUPFAM" id="SSF161033">
    <property type="entry name" value="Photosystem II reaction center protein M, PsbM"/>
    <property type="match status" value="1"/>
</dbReference>
<accession>B1XIN0</accession>
<name>PSBM_PICP2</name>
<gene>
    <name evidence="1" type="primary">psbM</name>
    <name type="ordered locus">SYNPCC7002_A2151</name>
</gene>
<reference key="1">
    <citation type="submission" date="2008-02" db="EMBL/GenBank/DDBJ databases">
        <title>Complete sequence of Synechococcus sp. PCC 7002.</title>
        <authorList>
            <person name="Li T."/>
            <person name="Zhao J."/>
            <person name="Zhao C."/>
            <person name="Liu Z."/>
            <person name="Zhao F."/>
            <person name="Marquardt J."/>
            <person name="Nomura C.T."/>
            <person name="Persson S."/>
            <person name="Detter J.C."/>
            <person name="Richardson P.M."/>
            <person name="Lanz C."/>
            <person name="Schuster S.C."/>
            <person name="Wang J."/>
            <person name="Li S."/>
            <person name="Huang X."/>
            <person name="Cai T."/>
            <person name="Yu Z."/>
            <person name="Luo J."/>
            <person name="Zhao J."/>
            <person name="Bryant D.A."/>
        </authorList>
    </citation>
    <scope>NUCLEOTIDE SEQUENCE [LARGE SCALE GENOMIC DNA]</scope>
    <source>
        <strain>ATCC 27264 / PCC 7002 / PR-6</strain>
    </source>
</reference>
<organism>
    <name type="scientific">Picosynechococcus sp. (strain ATCC 27264 / PCC 7002 / PR-6)</name>
    <name type="common">Agmenellum quadruplicatum</name>
    <dbReference type="NCBI Taxonomy" id="32049"/>
    <lineage>
        <taxon>Bacteria</taxon>
        <taxon>Bacillati</taxon>
        <taxon>Cyanobacteriota</taxon>
        <taxon>Cyanophyceae</taxon>
        <taxon>Oscillatoriophycideae</taxon>
        <taxon>Chroococcales</taxon>
        <taxon>Geminocystaceae</taxon>
        <taxon>Picosynechococcus</taxon>
    </lineage>
</organism>
<proteinExistence type="inferred from homology"/>